<sequence>MSVTQPLFSTIEPDEETTAPSGNIQDNRSSKPRPEPIVLTPTTRSTSSNSNAQNTMASNEGDAEAGIAGIFRQSAHPLALFFLYFFRIAAILVYILCGWFTDNYVLSTVTVVVLLAMDFWNCRNVAGRTLVGLRFWNQVDEDGESYWVFESRDPSRPANPIDSKMFWIALYVFPLLWGALLIVSILKLGFAFIPIVVLALVFNITNVVGFTYADRDAKQKWANSVVGGSWGGIGGIGGQLLTTAVKKGVGRVFG</sequence>
<protein>
    <recommendedName>
        <fullName>Golgi apparatus membrane protein TVP23</fullName>
    </recommendedName>
</protein>
<name>TVP23_COPC7</name>
<evidence type="ECO:0000250" key="1"/>
<evidence type="ECO:0000255" key="2"/>
<evidence type="ECO:0000256" key="3">
    <source>
        <dbReference type="SAM" id="MobiDB-lite"/>
    </source>
</evidence>
<evidence type="ECO:0000305" key="4"/>
<feature type="chain" id="PRO_0000343045" description="Golgi apparatus membrane protein TVP23">
    <location>
        <begin position="1"/>
        <end position="254"/>
    </location>
</feature>
<feature type="transmembrane region" description="Helical" evidence="2">
    <location>
        <begin position="80"/>
        <end position="100"/>
    </location>
</feature>
<feature type="transmembrane region" description="Helical" evidence="2">
    <location>
        <begin position="104"/>
        <end position="120"/>
    </location>
</feature>
<feature type="transmembrane region" description="Helical" evidence="2">
    <location>
        <begin position="166"/>
        <end position="186"/>
    </location>
</feature>
<feature type="transmembrane region" description="Helical" evidence="2">
    <location>
        <begin position="190"/>
        <end position="210"/>
    </location>
</feature>
<feature type="region of interest" description="Disordered" evidence="3">
    <location>
        <begin position="1"/>
        <end position="59"/>
    </location>
</feature>
<feature type="compositionally biased region" description="Polar residues" evidence="3">
    <location>
        <begin position="18"/>
        <end position="27"/>
    </location>
</feature>
<feature type="compositionally biased region" description="Low complexity" evidence="3">
    <location>
        <begin position="40"/>
        <end position="59"/>
    </location>
</feature>
<reference key="1">
    <citation type="journal article" date="2010" name="Proc. Natl. Acad. Sci. U.S.A.">
        <title>Insights into evolution of multicellular fungi from the assembled chromosomes of the mushroom Coprinopsis cinerea (Coprinus cinereus).</title>
        <authorList>
            <person name="Stajich J.E."/>
            <person name="Wilke S.K."/>
            <person name="Ahren D."/>
            <person name="Au C.H."/>
            <person name="Birren B.W."/>
            <person name="Borodovsky M."/>
            <person name="Burns C."/>
            <person name="Canbaeck B."/>
            <person name="Casselton L.A."/>
            <person name="Cheng C.K."/>
            <person name="Deng J."/>
            <person name="Dietrich F.S."/>
            <person name="Fargo D.C."/>
            <person name="Farman M.L."/>
            <person name="Gathman A.C."/>
            <person name="Goldberg J."/>
            <person name="Guigo R."/>
            <person name="Hoegger P.J."/>
            <person name="Hooker J.B."/>
            <person name="Huggins A."/>
            <person name="James T.Y."/>
            <person name="Kamada T."/>
            <person name="Kilaru S."/>
            <person name="Kodira C."/>
            <person name="Kuees U."/>
            <person name="Kupfer D."/>
            <person name="Kwan H.S."/>
            <person name="Lomsadze A."/>
            <person name="Li W."/>
            <person name="Lilly W.W."/>
            <person name="Ma L.-J."/>
            <person name="Mackey A.J."/>
            <person name="Manning G."/>
            <person name="Martin F."/>
            <person name="Muraguchi H."/>
            <person name="Natvig D.O."/>
            <person name="Palmerini H."/>
            <person name="Ramesh M.A."/>
            <person name="Rehmeyer C.J."/>
            <person name="Roe B.A."/>
            <person name="Shenoy N."/>
            <person name="Stanke M."/>
            <person name="Ter-Hovhannisyan V."/>
            <person name="Tunlid A."/>
            <person name="Velagapudi R."/>
            <person name="Vision T.J."/>
            <person name="Zeng Q."/>
            <person name="Zolan M.E."/>
            <person name="Pukkila P.J."/>
        </authorList>
    </citation>
    <scope>NUCLEOTIDE SEQUENCE [LARGE SCALE GENOMIC DNA]</scope>
    <source>
        <strain>Okayama-7 / 130 / ATCC MYA-4618 / FGSC 9003</strain>
    </source>
</reference>
<accession>A8N1Z1</accession>
<gene>
    <name type="primary">TVP23</name>
    <name type="ORF">CC1G_03684</name>
</gene>
<dbReference type="EMBL" id="AACS02000001">
    <property type="protein sequence ID" value="EAU92897.2"/>
    <property type="molecule type" value="Genomic_DNA"/>
</dbReference>
<dbReference type="RefSeq" id="XP_001828890.2">
    <property type="nucleotide sequence ID" value="XM_001828838.2"/>
</dbReference>
<dbReference type="FunCoup" id="A8N1Z1">
    <property type="interactions" value="145"/>
</dbReference>
<dbReference type="STRING" id="240176.A8N1Z1"/>
<dbReference type="GeneID" id="6005316"/>
<dbReference type="KEGG" id="cci:CC1G_03684"/>
<dbReference type="VEuPathDB" id="FungiDB:CC1G_03684"/>
<dbReference type="eggNOG" id="KOG3195">
    <property type="taxonomic scope" value="Eukaryota"/>
</dbReference>
<dbReference type="HOGENOM" id="CLU_074845_0_1_1"/>
<dbReference type="InParanoid" id="A8N1Z1"/>
<dbReference type="OMA" id="WNCRNVS"/>
<dbReference type="OrthoDB" id="2151161at2759"/>
<dbReference type="Proteomes" id="UP000001861">
    <property type="component" value="Unassembled WGS sequence"/>
</dbReference>
<dbReference type="GO" id="GO:0000139">
    <property type="term" value="C:Golgi membrane"/>
    <property type="evidence" value="ECO:0007669"/>
    <property type="project" value="UniProtKB-SubCell"/>
</dbReference>
<dbReference type="GO" id="GO:0009306">
    <property type="term" value="P:protein secretion"/>
    <property type="evidence" value="ECO:0007669"/>
    <property type="project" value="TreeGrafter"/>
</dbReference>
<dbReference type="GO" id="GO:0016192">
    <property type="term" value="P:vesicle-mediated transport"/>
    <property type="evidence" value="ECO:0007669"/>
    <property type="project" value="TreeGrafter"/>
</dbReference>
<dbReference type="InterPro" id="IPR008564">
    <property type="entry name" value="TVP23-like"/>
</dbReference>
<dbReference type="PANTHER" id="PTHR13019">
    <property type="entry name" value="GOLGI APPARATUS MEMBRANE PROTEIN TVP23"/>
    <property type="match status" value="1"/>
</dbReference>
<dbReference type="PANTHER" id="PTHR13019:SF7">
    <property type="entry name" value="GOLGI APPARATUS MEMBRANE PROTEIN TVP23"/>
    <property type="match status" value="1"/>
</dbReference>
<dbReference type="Pfam" id="PF05832">
    <property type="entry name" value="DUF846"/>
    <property type="match status" value="1"/>
</dbReference>
<comment type="function">
    <text evidence="1">Golgi membrane protein involved in vesicular trafficking.</text>
</comment>
<comment type="subcellular location">
    <subcellularLocation>
        <location evidence="1">Golgi apparatus membrane</location>
        <topology evidence="1">Multi-pass membrane protein</topology>
    </subcellularLocation>
</comment>
<comment type="similarity">
    <text evidence="4">Belongs to the TVP23 family.</text>
</comment>
<keyword id="KW-0333">Golgi apparatus</keyword>
<keyword id="KW-0472">Membrane</keyword>
<keyword id="KW-1185">Reference proteome</keyword>
<keyword id="KW-0812">Transmembrane</keyword>
<keyword id="KW-1133">Transmembrane helix</keyword>
<organism>
    <name type="scientific">Coprinopsis cinerea (strain Okayama-7 / 130 / ATCC MYA-4618 / FGSC 9003)</name>
    <name type="common">Inky cap fungus</name>
    <name type="synonym">Hormographiella aspergillata</name>
    <dbReference type="NCBI Taxonomy" id="240176"/>
    <lineage>
        <taxon>Eukaryota</taxon>
        <taxon>Fungi</taxon>
        <taxon>Dikarya</taxon>
        <taxon>Basidiomycota</taxon>
        <taxon>Agaricomycotina</taxon>
        <taxon>Agaricomycetes</taxon>
        <taxon>Agaricomycetidae</taxon>
        <taxon>Agaricales</taxon>
        <taxon>Agaricineae</taxon>
        <taxon>Psathyrellaceae</taxon>
        <taxon>Coprinopsis</taxon>
    </lineage>
</organism>
<proteinExistence type="inferred from homology"/>